<proteinExistence type="inferred from homology"/>
<sequence>MSEFQLVTRFQPAGDQPEAIRQLVEGIEAGLSHQTLLGVTGSGKTFSIANVIQQVQRPTLVLAPNKTLAAQLYGEFKAFFPNNAVEYFVSYYDYYQPEAYVPSSDTFIEKDASINDHIEQMRLSATKALLERRDAIIVTTVSCIYGLGSPETYLKMVLHVDRGDKLDQRALLRRLADLQYTRNEMDFARATFRVRGDVIDIFPAESDLEAIRIELFDDEVENIAAFDPLTGEVFRKLPRFTFYPKSHYVTPRETLLEAVEGIKEELKERLEYLHKANKLVEAQRLEQRTRFDLEMILELGYCNGIENYSRYLSGRPAGAPPPTLYDYLPPDALLVIDESHVSVPQVGAMYKGDRSRKETLVEYGFRMPSALDNRPMRFDEWEDVSPQTIFVSATPGPYEAEHAGRVVEQVVRPTGLVDPQVEVRPALTQVDDLLSEIRKRVAAGERVLATTLTKRMAEDLSDYLADHDVRVRYLHSDIDTVERVEIIRDLRLGTFDVLVGINLLREGLDMPEVSLVAILDADKEGFLRSERSLIQTIGRAARNLNGRAILYADNVTGSMQRAIDETERRREKQIAFNEANGIVPKGVVKDITDIMEGATVPGARSKKRKGMAKAAEESARYEAELRTPGEITKRIKQLEEKMMQFARDLEFEAAAQLRDEIAQLRERLISS</sequence>
<gene>
    <name evidence="1" type="primary">uvrB</name>
    <name type="ordered locus">PP_1974</name>
</gene>
<keyword id="KW-0067">ATP-binding</keyword>
<keyword id="KW-0963">Cytoplasm</keyword>
<keyword id="KW-0227">DNA damage</keyword>
<keyword id="KW-0228">DNA excision</keyword>
<keyword id="KW-0234">DNA repair</keyword>
<keyword id="KW-0267">Excision nuclease</keyword>
<keyword id="KW-0547">Nucleotide-binding</keyword>
<keyword id="KW-1185">Reference proteome</keyword>
<keyword id="KW-0742">SOS response</keyword>
<organism>
    <name type="scientific">Pseudomonas putida (strain ATCC 47054 / DSM 6125 / CFBP 8728 / NCIMB 11950 / KT2440)</name>
    <dbReference type="NCBI Taxonomy" id="160488"/>
    <lineage>
        <taxon>Bacteria</taxon>
        <taxon>Pseudomonadati</taxon>
        <taxon>Pseudomonadota</taxon>
        <taxon>Gammaproteobacteria</taxon>
        <taxon>Pseudomonadales</taxon>
        <taxon>Pseudomonadaceae</taxon>
        <taxon>Pseudomonas</taxon>
    </lineage>
</organism>
<name>UVRB_PSEPK</name>
<accession>Q88LF9</accession>
<protein>
    <recommendedName>
        <fullName evidence="1">UvrABC system protein B</fullName>
        <shortName evidence="1">Protein UvrB</shortName>
    </recommendedName>
    <alternativeName>
        <fullName evidence="1">Excinuclease ABC subunit B</fullName>
    </alternativeName>
</protein>
<reference key="1">
    <citation type="journal article" date="2002" name="Environ. Microbiol.">
        <title>Complete genome sequence and comparative analysis of the metabolically versatile Pseudomonas putida KT2440.</title>
        <authorList>
            <person name="Nelson K.E."/>
            <person name="Weinel C."/>
            <person name="Paulsen I.T."/>
            <person name="Dodson R.J."/>
            <person name="Hilbert H."/>
            <person name="Martins dos Santos V.A.P."/>
            <person name="Fouts D.E."/>
            <person name="Gill S.R."/>
            <person name="Pop M."/>
            <person name="Holmes M."/>
            <person name="Brinkac L.M."/>
            <person name="Beanan M.J."/>
            <person name="DeBoy R.T."/>
            <person name="Daugherty S.C."/>
            <person name="Kolonay J.F."/>
            <person name="Madupu R."/>
            <person name="Nelson W.C."/>
            <person name="White O."/>
            <person name="Peterson J.D."/>
            <person name="Khouri H.M."/>
            <person name="Hance I."/>
            <person name="Chris Lee P."/>
            <person name="Holtzapple E.K."/>
            <person name="Scanlan D."/>
            <person name="Tran K."/>
            <person name="Moazzez A."/>
            <person name="Utterback T.R."/>
            <person name="Rizzo M."/>
            <person name="Lee K."/>
            <person name="Kosack D."/>
            <person name="Moestl D."/>
            <person name="Wedler H."/>
            <person name="Lauber J."/>
            <person name="Stjepandic D."/>
            <person name="Hoheisel J."/>
            <person name="Straetz M."/>
            <person name="Heim S."/>
            <person name="Kiewitz C."/>
            <person name="Eisen J.A."/>
            <person name="Timmis K.N."/>
            <person name="Duesterhoeft A."/>
            <person name="Tuemmler B."/>
            <person name="Fraser C.M."/>
        </authorList>
    </citation>
    <scope>NUCLEOTIDE SEQUENCE [LARGE SCALE GENOMIC DNA]</scope>
    <source>
        <strain>ATCC 47054 / DSM 6125 / CFBP 8728 / NCIMB 11950 / KT2440</strain>
    </source>
</reference>
<feature type="chain" id="PRO_0000227349" description="UvrABC system protein B">
    <location>
        <begin position="1"/>
        <end position="671"/>
    </location>
</feature>
<feature type="domain" description="Helicase ATP-binding" evidence="1">
    <location>
        <begin position="25"/>
        <end position="412"/>
    </location>
</feature>
<feature type="domain" description="Helicase C-terminal" evidence="1">
    <location>
        <begin position="429"/>
        <end position="582"/>
    </location>
</feature>
<feature type="domain" description="UVR" evidence="1">
    <location>
        <begin position="632"/>
        <end position="667"/>
    </location>
</feature>
<feature type="short sequence motif" description="Beta-hairpin">
    <location>
        <begin position="91"/>
        <end position="114"/>
    </location>
</feature>
<feature type="binding site" evidence="1">
    <location>
        <begin position="38"/>
        <end position="45"/>
    </location>
    <ligand>
        <name>ATP</name>
        <dbReference type="ChEBI" id="CHEBI:30616"/>
    </ligand>
</feature>
<comment type="function">
    <text evidence="1">The UvrABC repair system catalyzes the recognition and processing of DNA lesions. A damage recognition complex composed of 2 UvrA and 2 UvrB subunits scans DNA for abnormalities. Upon binding of the UvrA(2)B(2) complex to a putative damaged site, the DNA wraps around one UvrB monomer. DNA wrap is dependent on ATP binding by UvrB and probably causes local melting of the DNA helix, facilitating insertion of UvrB beta-hairpin between the DNA strands. Then UvrB probes one DNA strand for the presence of a lesion. If a lesion is found the UvrA subunits dissociate and the UvrB-DNA preincision complex is formed. This complex is subsequently bound by UvrC and the second UvrB is released. If no lesion is found, the DNA wraps around the other UvrB subunit that will check the other stand for damage.</text>
</comment>
<comment type="subunit">
    <text evidence="1">Forms a heterotetramer with UvrA during the search for lesions. Interacts with UvrC in an incision complex.</text>
</comment>
<comment type="subcellular location">
    <subcellularLocation>
        <location evidence="1">Cytoplasm</location>
    </subcellularLocation>
</comment>
<comment type="domain">
    <text evidence="1">The beta-hairpin motif is involved in DNA binding.</text>
</comment>
<comment type="similarity">
    <text evidence="1">Belongs to the UvrB family.</text>
</comment>
<dbReference type="EMBL" id="AE015451">
    <property type="protein sequence ID" value="AAN67589.1"/>
    <property type="molecule type" value="Genomic_DNA"/>
</dbReference>
<dbReference type="RefSeq" id="NP_744125.1">
    <property type="nucleotide sequence ID" value="NC_002947.4"/>
</dbReference>
<dbReference type="RefSeq" id="WP_010952992.1">
    <property type="nucleotide sequence ID" value="NZ_CP169744.1"/>
</dbReference>
<dbReference type="SMR" id="Q88LF9"/>
<dbReference type="STRING" id="160488.PP_1974"/>
<dbReference type="PaxDb" id="160488-PP_1974"/>
<dbReference type="GeneID" id="83681527"/>
<dbReference type="KEGG" id="ppu:PP_1974"/>
<dbReference type="PATRIC" id="fig|160488.4.peg.2082"/>
<dbReference type="eggNOG" id="COG0556">
    <property type="taxonomic scope" value="Bacteria"/>
</dbReference>
<dbReference type="HOGENOM" id="CLU_009621_2_1_6"/>
<dbReference type="OrthoDB" id="9806651at2"/>
<dbReference type="PhylomeDB" id="Q88LF9"/>
<dbReference type="BioCyc" id="PPUT160488:G1G01-2099-MONOMER"/>
<dbReference type="Proteomes" id="UP000000556">
    <property type="component" value="Chromosome"/>
</dbReference>
<dbReference type="GO" id="GO:0005737">
    <property type="term" value="C:cytoplasm"/>
    <property type="evidence" value="ECO:0007669"/>
    <property type="project" value="UniProtKB-SubCell"/>
</dbReference>
<dbReference type="GO" id="GO:0009380">
    <property type="term" value="C:excinuclease repair complex"/>
    <property type="evidence" value="ECO:0007669"/>
    <property type="project" value="InterPro"/>
</dbReference>
<dbReference type="GO" id="GO:0005524">
    <property type="term" value="F:ATP binding"/>
    <property type="evidence" value="ECO:0007669"/>
    <property type="project" value="UniProtKB-UniRule"/>
</dbReference>
<dbReference type="GO" id="GO:0016887">
    <property type="term" value="F:ATP hydrolysis activity"/>
    <property type="evidence" value="ECO:0007669"/>
    <property type="project" value="InterPro"/>
</dbReference>
<dbReference type="GO" id="GO:0003677">
    <property type="term" value="F:DNA binding"/>
    <property type="evidence" value="ECO:0007669"/>
    <property type="project" value="UniProtKB-UniRule"/>
</dbReference>
<dbReference type="GO" id="GO:0009381">
    <property type="term" value="F:excinuclease ABC activity"/>
    <property type="evidence" value="ECO:0007669"/>
    <property type="project" value="UniProtKB-UniRule"/>
</dbReference>
<dbReference type="GO" id="GO:0006289">
    <property type="term" value="P:nucleotide-excision repair"/>
    <property type="evidence" value="ECO:0007669"/>
    <property type="project" value="UniProtKB-UniRule"/>
</dbReference>
<dbReference type="GO" id="GO:0009432">
    <property type="term" value="P:SOS response"/>
    <property type="evidence" value="ECO:0007669"/>
    <property type="project" value="UniProtKB-UniRule"/>
</dbReference>
<dbReference type="CDD" id="cd17916">
    <property type="entry name" value="DEXHc_UvrB"/>
    <property type="match status" value="1"/>
</dbReference>
<dbReference type="CDD" id="cd18790">
    <property type="entry name" value="SF2_C_UvrB"/>
    <property type="match status" value="1"/>
</dbReference>
<dbReference type="FunFam" id="3.40.50.300:FF:000477">
    <property type="entry name" value="UvrABC system protein B"/>
    <property type="match status" value="1"/>
</dbReference>
<dbReference type="Gene3D" id="6.10.140.240">
    <property type="match status" value="1"/>
</dbReference>
<dbReference type="Gene3D" id="3.40.50.300">
    <property type="entry name" value="P-loop containing nucleotide triphosphate hydrolases"/>
    <property type="match status" value="3"/>
</dbReference>
<dbReference type="Gene3D" id="4.10.860.10">
    <property type="entry name" value="UVR domain"/>
    <property type="match status" value="1"/>
</dbReference>
<dbReference type="HAMAP" id="MF_00204">
    <property type="entry name" value="UvrB"/>
    <property type="match status" value="1"/>
</dbReference>
<dbReference type="InterPro" id="IPR006935">
    <property type="entry name" value="Helicase/UvrB_N"/>
</dbReference>
<dbReference type="InterPro" id="IPR014001">
    <property type="entry name" value="Helicase_ATP-bd"/>
</dbReference>
<dbReference type="InterPro" id="IPR001650">
    <property type="entry name" value="Helicase_C-like"/>
</dbReference>
<dbReference type="InterPro" id="IPR027417">
    <property type="entry name" value="P-loop_NTPase"/>
</dbReference>
<dbReference type="InterPro" id="IPR001943">
    <property type="entry name" value="UVR_dom"/>
</dbReference>
<dbReference type="InterPro" id="IPR036876">
    <property type="entry name" value="UVR_dom_sf"/>
</dbReference>
<dbReference type="InterPro" id="IPR004807">
    <property type="entry name" value="UvrB"/>
</dbReference>
<dbReference type="InterPro" id="IPR041471">
    <property type="entry name" value="UvrB_inter"/>
</dbReference>
<dbReference type="InterPro" id="IPR024759">
    <property type="entry name" value="UvrB_YAD/RRR_dom"/>
</dbReference>
<dbReference type="NCBIfam" id="NF003673">
    <property type="entry name" value="PRK05298.1"/>
    <property type="match status" value="1"/>
</dbReference>
<dbReference type="NCBIfam" id="TIGR00631">
    <property type="entry name" value="uvrb"/>
    <property type="match status" value="1"/>
</dbReference>
<dbReference type="PANTHER" id="PTHR24029">
    <property type="entry name" value="UVRABC SYSTEM PROTEIN B"/>
    <property type="match status" value="1"/>
</dbReference>
<dbReference type="PANTHER" id="PTHR24029:SF0">
    <property type="entry name" value="UVRABC SYSTEM PROTEIN B"/>
    <property type="match status" value="1"/>
</dbReference>
<dbReference type="Pfam" id="PF00271">
    <property type="entry name" value="Helicase_C"/>
    <property type="match status" value="1"/>
</dbReference>
<dbReference type="Pfam" id="PF04851">
    <property type="entry name" value="ResIII"/>
    <property type="match status" value="1"/>
</dbReference>
<dbReference type="Pfam" id="PF02151">
    <property type="entry name" value="UVR"/>
    <property type="match status" value="1"/>
</dbReference>
<dbReference type="Pfam" id="PF12344">
    <property type="entry name" value="UvrB"/>
    <property type="match status" value="1"/>
</dbReference>
<dbReference type="Pfam" id="PF17757">
    <property type="entry name" value="UvrB_inter"/>
    <property type="match status" value="1"/>
</dbReference>
<dbReference type="SMART" id="SM00487">
    <property type="entry name" value="DEXDc"/>
    <property type="match status" value="1"/>
</dbReference>
<dbReference type="SMART" id="SM00490">
    <property type="entry name" value="HELICc"/>
    <property type="match status" value="1"/>
</dbReference>
<dbReference type="SUPFAM" id="SSF46600">
    <property type="entry name" value="C-terminal UvrC-binding domain of UvrB"/>
    <property type="match status" value="1"/>
</dbReference>
<dbReference type="SUPFAM" id="SSF52540">
    <property type="entry name" value="P-loop containing nucleoside triphosphate hydrolases"/>
    <property type="match status" value="2"/>
</dbReference>
<dbReference type="PROSITE" id="PS51192">
    <property type="entry name" value="HELICASE_ATP_BIND_1"/>
    <property type="match status" value="1"/>
</dbReference>
<dbReference type="PROSITE" id="PS51194">
    <property type="entry name" value="HELICASE_CTER"/>
    <property type="match status" value="1"/>
</dbReference>
<dbReference type="PROSITE" id="PS50151">
    <property type="entry name" value="UVR"/>
    <property type="match status" value="1"/>
</dbReference>
<evidence type="ECO:0000255" key="1">
    <source>
        <dbReference type="HAMAP-Rule" id="MF_00204"/>
    </source>
</evidence>